<dbReference type="EC" id="6.3.4.2" evidence="1"/>
<dbReference type="EMBL" id="AE004439">
    <property type="protein sequence ID" value="AAK03956.1"/>
    <property type="molecule type" value="Genomic_DNA"/>
</dbReference>
<dbReference type="RefSeq" id="WP_010907392.1">
    <property type="nucleotide sequence ID" value="NC_002663.1"/>
</dbReference>
<dbReference type="SMR" id="Q9CJW9"/>
<dbReference type="STRING" id="272843.PM1872"/>
<dbReference type="EnsemblBacteria" id="AAK03956">
    <property type="protein sequence ID" value="AAK03956"/>
    <property type="gene ID" value="PM1872"/>
</dbReference>
<dbReference type="KEGG" id="pmu:PM1872"/>
<dbReference type="PATRIC" id="fig|272843.6.peg.1894"/>
<dbReference type="HOGENOM" id="CLU_011675_5_0_6"/>
<dbReference type="OrthoDB" id="9801107at2"/>
<dbReference type="UniPathway" id="UPA00159">
    <property type="reaction ID" value="UER00277"/>
</dbReference>
<dbReference type="Proteomes" id="UP000000809">
    <property type="component" value="Chromosome"/>
</dbReference>
<dbReference type="GO" id="GO:0005829">
    <property type="term" value="C:cytosol"/>
    <property type="evidence" value="ECO:0007669"/>
    <property type="project" value="TreeGrafter"/>
</dbReference>
<dbReference type="GO" id="GO:0005524">
    <property type="term" value="F:ATP binding"/>
    <property type="evidence" value="ECO:0007669"/>
    <property type="project" value="UniProtKB-KW"/>
</dbReference>
<dbReference type="GO" id="GO:0003883">
    <property type="term" value="F:CTP synthase activity"/>
    <property type="evidence" value="ECO:0007669"/>
    <property type="project" value="UniProtKB-UniRule"/>
</dbReference>
<dbReference type="GO" id="GO:0004359">
    <property type="term" value="F:glutaminase activity"/>
    <property type="evidence" value="ECO:0007669"/>
    <property type="project" value="RHEA"/>
</dbReference>
<dbReference type="GO" id="GO:0042802">
    <property type="term" value="F:identical protein binding"/>
    <property type="evidence" value="ECO:0007669"/>
    <property type="project" value="TreeGrafter"/>
</dbReference>
<dbReference type="GO" id="GO:0046872">
    <property type="term" value="F:metal ion binding"/>
    <property type="evidence" value="ECO:0007669"/>
    <property type="project" value="UniProtKB-KW"/>
</dbReference>
<dbReference type="GO" id="GO:0044210">
    <property type="term" value="P:'de novo' CTP biosynthetic process"/>
    <property type="evidence" value="ECO:0007669"/>
    <property type="project" value="UniProtKB-UniRule"/>
</dbReference>
<dbReference type="GO" id="GO:0019856">
    <property type="term" value="P:pyrimidine nucleobase biosynthetic process"/>
    <property type="evidence" value="ECO:0007669"/>
    <property type="project" value="TreeGrafter"/>
</dbReference>
<dbReference type="CDD" id="cd03113">
    <property type="entry name" value="CTPS_N"/>
    <property type="match status" value="1"/>
</dbReference>
<dbReference type="CDD" id="cd01746">
    <property type="entry name" value="GATase1_CTP_Synthase"/>
    <property type="match status" value="1"/>
</dbReference>
<dbReference type="FunFam" id="3.40.50.300:FF:000009">
    <property type="entry name" value="CTP synthase"/>
    <property type="match status" value="1"/>
</dbReference>
<dbReference type="FunFam" id="3.40.50.880:FF:000002">
    <property type="entry name" value="CTP synthase"/>
    <property type="match status" value="1"/>
</dbReference>
<dbReference type="Gene3D" id="3.40.50.880">
    <property type="match status" value="1"/>
</dbReference>
<dbReference type="Gene3D" id="3.40.50.300">
    <property type="entry name" value="P-loop containing nucleotide triphosphate hydrolases"/>
    <property type="match status" value="1"/>
</dbReference>
<dbReference type="HAMAP" id="MF_01227">
    <property type="entry name" value="PyrG"/>
    <property type="match status" value="1"/>
</dbReference>
<dbReference type="InterPro" id="IPR029062">
    <property type="entry name" value="Class_I_gatase-like"/>
</dbReference>
<dbReference type="InterPro" id="IPR004468">
    <property type="entry name" value="CTP_synthase"/>
</dbReference>
<dbReference type="InterPro" id="IPR017456">
    <property type="entry name" value="CTP_synthase_N"/>
</dbReference>
<dbReference type="InterPro" id="IPR017926">
    <property type="entry name" value="GATASE"/>
</dbReference>
<dbReference type="InterPro" id="IPR033828">
    <property type="entry name" value="GATase1_CTP_Synthase"/>
</dbReference>
<dbReference type="InterPro" id="IPR027417">
    <property type="entry name" value="P-loop_NTPase"/>
</dbReference>
<dbReference type="NCBIfam" id="NF003792">
    <property type="entry name" value="PRK05380.1"/>
    <property type="match status" value="1"/>
</dbReference>
<dbReference type="NCBIfam" id="TIGR00337">
    <property type="entry name" value="PyrG"/>
    <property type="match status" value="1"/>
</dbReference>
<dbReference type="PANTHER" id="PTHR11550">
    <property type="entry name" value="CTP SYNTHASE"/>
    <property type="match status" value="1"/>
</dbReference>
<dbReference type="PANTHER" id="PTHR11550:SF0">
    <property type="entry name" value="CTP SYNTHASE-RELATED"/>
    <property type="match status" value="1"/>
</dbReference>
<dbReference type="Pfam" id="PF06418">
    <property type="entry name" value="CTP_synth_N"/>
    <property type="match status" value="1"/>
</dbReference>
<dbReference type="Pfam" id="PF00117">
    <property type="entry name" value="GATase"/>
    <property type="match status" value="1"/>
</dbReference>
<dbReference type="SUPFAM" id="SSF52317">
    <property type="entry name" value="Class I glutamine amidotransferase-like"/>
    <property type="match status" value="1"/>
</dbReference>
<dbReference type="SUPFAM" id="SSF52540">
    <property type="entry name" value="P-loop containing nucleoside triphosphate hydrolases"/>
    <property type="match status" value="1"/>
</dbReference>
<dbReference type="PROSITE" id="PS51273">
    <property type="entry name" value="GATASE_TYPE_1"/>
    <property type="match status" value="1"/>
</dbReference>
<organism>
    <name type="scientific">Pasteurella multocida (strain Pm70)</name>
    <dbReference type="NCBI Taxonomy" id="272843"/>
    <lineage>
        <taxon>Bacteria</taxon>
        <taxon>Pseudomonadati</taxon>
        <taxon>Pseudomonadota</taxon>
        <taxon>Gammaproteobacteria</taxon>
        <taxon>Pasteurellales</taxon>
        <taxon>Pasteurellaceae</taxon>
        <taxon>Pasteurella</taxon>
    </lineage>
</organism>
<evidence type="ECO:0000255" key="1">
    <source>
        <dbReference type="HAMAP-Rule" id="MF_01227"/>
    </source>
</evidence>
<accession>Q9CJW9</accession>
<keyword id="KW-0067">ATP-binding</keyword>
<keyword id="KW-0315">Glutamine amidotransferase</keyword>
<keyword id="KW-0436">Ligase</keyword>
<keyword id="KW-0460">Magnesium</keyword>
<keyword id="KW-0479">Metal-binding</keyword>
<keyword id="KW-0547">Nucleotide-binding</keyword>
<keyword id="KW-0665">Pyrimidine biosynthesis</keyword>
<keyword id="KW-1185">Reference proteome</keyword>
<sequence>MATNYIFVTGGVVSSLGKGIAAASLAAILEARGLKVTMLKLDPYINVDPGTMSPTQHGEVFVTQDGAETDLDLGHYERFIRTKMTKRNNFTTGKIYSEVLRKERRGDYLGATIQVIPHITNEIKSRVIDGAAGHDVAIVEVGGTVGDIESLPFLEALRQLAVQVGRERTLFMHLTLVPYIPTAGEVKTKPTQHSVKELLSIGIQPDVLICRSDRMVPPNERAKIALFCNVPERAVISLKDVSSIYQIPALLKSQGLDDFICQRFHLDCPEADLSEWEQVLYQEANPTGEVVIGMVGKYTELPDAYKSVNEALKHAGLKNRLSVQIKYIDSQDVETKGTEVLEGVDGILVPGGFGNRGVEGKILTAKYARENHIPYLGICLGMQVAYIEYARNVAGLTDANSTEFDRTCDYPVVGLITEWQDAEGNIETRTDASDLGGTMRLGAQQCHLMEGSKARELYGAETIEERHRHRYEVNNVLRPQVEKAGLKVTGLSADKKLVEIIEVPNHPWFVACQFHPEFTSTPRDGHPLFAGFVKAAKDNQKK</sequence>
<reference key="1">
    <citation type="journal article" date="2001" name="Proc. Natl. Acad. Sci. U.S.A.">
        <title>Complete genomic sequence of Pasteurella multocida Pm70.</title>
        <authorList>
            <person name="May B.J."/>
            <person name="Zhang Q."/>
            <person name="Li L.L."/>
            <person name="Paustian M.L."/>
            <person name="Whittam T.S."/>
            <person name="Kapur V."/>
        </authorList>
    </citation>
    <scope>NUCLEOTIDE SEQUENCE [LARGE SCALE GENOMIC DNA]</scope>
    <source>
        <strain>Pm70</strain>
    </source>
</reference>
<protein>
    <recommendedName>
        <fullName evidence="1">CTP synthase</fullName>
        <ecNumber evidence="1">6.3.4.2</ecNumber>
    </recommendedName>
    <alternativeName>
        <fullName evidence="1">Cytidine 5'-triphosphate synthase</fullName>
    </alternativeName>
    <alternativeName>
        <fullName evidence="1">Cytidine triphosphate synthetase</fullName>
        <shortName evidence="1">CTP synthetase</shortName>
        <shortName evidence="1">CTPS</shortName>
    </alternativeName>
    <alternativeName>
        <fullName evidence="1">UTP--ammonia ligase</fullName>
    </alternativeName>
</protein>
<proteinExistence type="inferred from homology"/>
<gene>
    <name evidence="1" type="primary">pyrG</name>
    <name type="ordered locus">PM1872</name>
</gene>
<feature type="chain" id="PRO_0000138209" description="CTP synthase">
    <location>
        <begin position="1"/>
        <end position="542"/>
    </location>
</feature>
<feature type="domain" description="Glutamine amidotransferase type-1" evidence="1">
    <location>
        <begin position="291"/>
        <end position="542"/>
    </location>
</feature>
<feature type="region of interest" description="Amidoligase domain" evidence="1">
    <location>
        <begin position="1"/>
        <end position="266"/>
    </location>
</feature>
<feature type="active site" description="Nucleophile; for glutamine hydrolysis" evidence="1">
    <location>
        <position position="379"/>
    </location>
</feature>
<feature type="active site" evidence="1">
    <location>
        <position position="515"/>
    </location>
</feature>
<feature type="active site" evidence="1">
    <location>
        <position position="517"/>
    </location>
</feature>
<feature type="binding site" evidence="1">
    <location>
        <position position="14"/>
    </location>
    <ligand>
        <name>CTP</name>
        <dbReference type="ChEBI" id="CHEBI:37563"/>
        <note>allosteric inhibitor</note>
    </ligand>
</feature>
<feature type="binding site" evidence="1">
    <location>
        <position position="14"/>
    </location>
    <ligand>
        <name>UTP</name>
        <dbReference type="ChEBI" id="CHEBI:46398"/>
    </ligand>
</feature>
<feature type="binding site" evidence="1">
    <location>
        <begin position="15"/>
        <end position="20"/>
    </location>
    <ligand>
        <name>ATP</name>
        <dbReference type="ChEBI" id="CHEBI:30616"/>
    </ligand>
</feature>
<feature type="binding site" evidence="1">
    <location>
        <position position="72"/>
    </location>
    <ligand>
        <name>ATP</name>
        <dbReference type="ChEBI" id="CHEBI:30616"/>
    </ligand>
</feature>
<feature type="binding site" evidence="1">
    <location>
        <position position="72"/>
    </location>
    <ligand>
        <name>Mg(2+)</name>
        <dbReference type="ChEBI" id="CHEBI:18420"/>
    </ligand>
</feature>
<feature type="binding site" evidence="1">
    <location>
        <position position="140"/>
    </location>
    <ligand>
        <name>Mg(2+)</name>
        <dbReference type="ChEBI" id="CHEBI:18420"/>
    </ligand>
</feature>
<feature type="binding site" evidence="1">
    <location>
        <begin position="147"/>
        <end position="149"/>
    </location>
    <ligand>
        <name>CTP</name>
        <dbReference type="ChEBI" id="CHEBI:37563"/>
        <note>allosteric inhibitor</note>
    </ligand>
</feature>
<feature type="binding site" evidence="1">
    <location>
        <begin position="187"/>
        <end position="192"/>
    </location>
    <ligand>
        <name>CTP</name>
        <dbReference type="ChEBI" id="CHEBI:37563"/>
        <note>allosteric inhibitor</note>
    </ligand>
</feature>
<feature type="binding site" evidence="1">
    <location>
        <begin position="187"/>
        <end position="192"/>
    </location>
    <ligand>
        <name>UTP</name>
        <dbReference type="ChEBI" id="CHEBI:46398"/>
    </ligand>
</feature>
<feature type="binding site" evidence="1">
    <location>
        <position position="223"/>
    </location>
    <ligand>
        <name>CTP</name>
        <dbReference type="ChEBI" id="CHEBI:37563"/>
        <note>allosteric inhibitor</note>
    </ligand>
</feature>
<feature type="binding site" evidence="1">
    <location>
        <position position="223"/>
    </location>
    <ligand>
        <name>UTP</name>
        <dbReference type="ChEBI" id="CHEBI:46398"/>
    </ligand>
</feature>
<feature type="binding site" evidence="1">
    <location>
        <begin position="239"/>
        <end position="241"/>
    </location>
    <ligand>
        <name>ATP</name>
        <dbReference type="ChEBI" id="CHEBI:30616"/>
    </ligand>
</feature>
<feature type="binding site" evidence="1">
    <location>
        <position position="352"/>
    </location>
    <ligand>
        <name>L-glutamine</name>
        <dbReference type="ChEBI" id="CHEBI:58359"/>
    </ligand>
</feature>
<feature type="binding site" evidence="1">
    <location>
        <begin position="380"/>
        <end position="383"/>
    </location>
    <ligand>
        <name>L-glutamine</name>
        <dbReference type="ChEBI" id="CHEBI:58359"/>
    </ligand>
</feature>
<feature type="binding site" evidence="1">
    <location>
        <position position="403"/>
    </location>
    <ligand>
        <name>L-glutamine</name>
        <dbReference type="ChEBI" id="CHEBI:58359"/>
    </ligand>
</feature>
<feature type="binding site" evidence="1">
    <location>
        <position position="470"/>
    </location>
    <ligand>
        <name>L-glutamine</name>
        <dbReference type="ChEBI" id="CHEBI:58359"/>
    </ligand>
</feature>
<comment type="function">
    <text evidence="1">Catalyzes the ATP-dependent amination of UTP to CTP with either L-glutamine or ammonia as the source of nitrogen. Regulates intracellular CTP levels through interactions with the four ribonucleotide triphosphates.</text>
</comment>
<comment type="catalytic activity">
    <reaction evidence="1">
        <text>UTP + L-glutamine + ATP + H2O = CTP + L-glutamate + ADP + phosphate + 2 H(+)</text>
        <dbReference type="Rhea" id="RHEA:26426"/>
        <dbReference type="ChEBI" id="CHEBI:15377"/>
        <dbReference type="ChEBI" id="CHEBI:15378"/>
        <dbReference type="ChEBI" id="CHEBI:29985"/>
        <dbReference type="ChEBI" id="CHEBI:30616"/>
        <dbReference type="ChEBI" id="CHEBI:37563"/>
        <dbReference type="ChEBI" id="CHEBI:43474"/>
        <dbReference type="ChEBI" id="CHEBI:46398"/>
        <dbReference type="ChEBI" id="CHEBI:58359"/>
        <dbReference type="ChEBI" id="CHEBI:456216"/>
        <dbReference type="EC" id="6.3.4.2"/>
    </reaction>
</comment>
<comment type="catalytic activity">
    <reaction evidence="1">
        <text>L-glutamine + H2O = L-glutamate + NH4(+)</text>
        <dbReference type="Rhea" id="RHEA:15889"/>
        <dbReference type="ChEBI" id="CHEBI:15377"/>
        <dbReference type="ChEBI" id="CHEBI:28938"/>
        <dbReference type="ChEBI" id="CHEBI:29985"/>
        <dbReference type="ChEBI" id="CHEBI:58359"/>
    </reaction>
</comment>
<comment type="catalytic activity">
    <reaction evidence="1">
        <text>UTP + NH4(+) + ATP = CTP + ADP + phosphate + 2 H(+)</text>
        <dbReference type="Rhea" id="RHEA:16597"/>
        <dbReference type="ChEBI" id="CHEBI:15378"/>
        <dbReference type="ChEBI" id="CHEBI:28938"/>
        <dbReference type="ChEBI" id="CHEBI:30616"/>
        <dbReference type="ChEBI" id="CHEBI:37563"/>
        <dbReference type="ChEBI" id="CHEBI:43474"/>
        <dbReference type="ChEBI" id="CHEBI:46398"/>
        <dbReference type="ChEBI" id="CHEBI:456216"/>
    </reaction>
</comment>
<comment type="activity regulation">
    <text evidence="1">Allosterically activated by GTP, when glutamine is the substrate; GTP has no effect on the reaction when ammonia is the substrate. The allosteric effector GTP functions by stabilizing the protein conformation that binds the tetrahedral intermediate(s) formed during glutamine hydrolysis. Inhibited by the product CTP, via allosteric rather than competitive inhibition.</text>
</comment>
<comment type="pathway">
    <text evidence="1">Pyrimidine metabolism; CTP biosynthesis via de novo pathway; CTP from UDP: step 2/2.</text>
</comment>
<comment type="subunit">
    <text evidence="1">Homotetramer.</text>
</comment>
<comment type="miscellaneous">
    <text evidence="1">CTPSs have evolved a hybrid strategy for distinguishing between UTP and CTP. The overlapping regions of the product feedback inhibitory and substrate sites recognize a common feature in both compounds, the triphosphate moiety. To differentiate isosteric substrate and product pyrimidine rings, an additional pocket far from the expected kinase/ligase catalytic site, specifically recognizes the cytosine and ribose portions of the product inhibitor.</text>
</comment>
<comment type="similarity">
    <text evidence="1">Belongs to the CTP synthase family.</text>
</comment>
<name>PYRG_PASMU</name>